<evidence type="ECO:0000255" key="1">
    <source>
        <dbReference type="HAMAP-Rule" id="MF_02043"/>
    </source>
</evidence>
<evidence type="ECO:0000305" key="2"/>
<name>DUSC_ECO57</name>
<dbReference type="EC" id="1.3.1.-" evidence="1"/>
<dbReference type="EMBL" id="AE005174">
    <property type="protein sequence ID" value="AAG57272.1"/>
    <property type="molecule type" value="Genomic_DNA"/>
</dbReference>
<dbReference type="EMBL" id="BA000007">
    <property type="protein sequence ID" value="BAB36449.1"/>
    <property type="molecule type" value="Genomic_DNA"/>
</dbReference>
<dbReference type="PIR" id="B91007">
    <property type="entry name" value="B91007"/>
</dbReference>
<dbReference type="PIR" id="D85851">
    <property type="entry name" value="D85851"/>
</dbReference>
<dbReference type="RefSeq" id="NP_311053.1">
    <property type="nucleotide sequence ID" value="NC_002695.1"/>
</dbReference>
<dbReference type="RefSeq" id="WP_001449147.1">
    <property type="nucleotide sequence ID" value="NZ_LPWC02000002.1"/>
</dbReference>
<dbReference type="SMR" id="Q8XEC6"/>
<dbReference type="STRING" id="155864.Z3389"/>
<dbReference type="GeneID" id="916730"/>
<dbReference type="KEGG" id="ece:Z3389"/>
<dbReference type="KEGG" id="ecs:ECs_3026"/>
<dbReference type="PATRIC" id="fig|386585.9.peg.3151"/>
<dbReference type="eggNOG" id="COG0042">
    <property type="taxonomic scope" value="Bacteria"/>
</dbReference>
<dbReference type="HOGENOM" id="CLU_013299_0_4_6"/>
<dbReference type="Proteomes" id="UP000000558">
    <property type="component" value="Chromosome"/>
</dbReference>
<dbReference type="Proteomes" id="UP000002519">
    <property type="component" value="Chromosome"/>
</dbReference>
<dbReference type="GO" id="GO:0050660">
    <property type="term" value="F:flavin adenine dinucleotide binding"/>
    <property type="evidence" value="ECO:0007669"/>
    <property type="project" value="InterPro"/>
</dbReference>
<dbReference type="GO" id="GO:0010181">
    <property type="term" value="F:FMN binding"/>
    <property type="evidence" value="ECO:0007669"/>
    <property type="project" value="UniProtKB-UniRule"/>
</dbReference>
<dbReference type="GO" id="GO:0000049">
    <property type="term" value="F:tRNA binding"/>
    <property type="evidence" value="ECO:0007669"/>
    <property type="project" value="UniProtKB-UniRule"/>
</dbReference>
<dbReference type="GO" id="GO:0102262">
    <property type="term" value="F:tRNA-dihydrouridine16 synthase activity"/>
    <property type="evidence" value="ECO:0007669"/>
    <property type="project" value="RHEA"/>
</dbReference>
<dbReference type="CDD" id="cd02801">
    <property type="entry name" value="DUS_like_FMN"/>
    <property type="match status" value="1"/>
</dbReference>
<dbReference type="FunFam" id="3.20.20.70:FF:000119">
    <property type="entry name" value="tRNA-dihydrouridine(16) synthase"/>
    <property type="match status" value="1"/>
</dbReference>
<dbReference type="Gene3D" id="3.20.20.70">
    <property type="entry name" value="Aldolase class I"/>
    <property type="match status" value="1"/>
</dbReference>
<dbReference type="Gene3D" id="1.20.225.30">
    <property type="entry name" value="Dihydrouridine synthase, C-terminal recognition domain"/>
    <property type="match status" value="1"/>
</dbReference>
<dbReference type="HAMAP" id="MF_02043">
    <property type="entry name" value="DusC_subfam"/>
    <property type="match status" value="1"/>
</dbReference>
<dbReference type="InterPro" id="IPR013785">
    <property type="entry name" value="Aldolase_TIM"/>
</dbReference>
<dbReference type="InterPro" id="IPR035587">
    <property type="entry name" value="DUS-like_FMN-bd"/>
</dbReference>
<dbReference type="InterPro" id="IPR001269">
    <property type="entry name" value="DUS_fam"/>
</dbReference>
<dbReference type="InterPro" id="IPR032886">
    <property type="entry name" value="DusC"/>
</dbReference>
<dbReference type="InterPro" id="IPR042270">
    <property type="entry name" value="DusC_C"/>
</dbReference>
<dbReference type="InterPro" id="IPR018517">
    <property type="entry name" value="tRNA_hU_synthase_CS"/>
</dbReference>
<dbReference type="NCBIfam" id="NF007838">
    <property type="entry name" value="PRK10550.1"/>
    <property type="match status" value="1"/>
</dbReference>
<dbReference type="PANTHER" id="PTHR11082">
    <property type="entry name" value="TRNA-DIHYDROURIDINE SYNTHASE"/>
    <property type="match status" value="1"/>
</dbReference>
<dbReference type="PANTHER" id="PTHR11082:SF26">
    <property type="entry name" value="TRNA-DIHYDROURIDINE(16) SYNTHASE"/>
    <property type="match status" value="1"/>
</dbReference>
<dbReference type="Pfam" id="PF01207">
    <property type="entry name" value="Dus"/>
    <property type="match status" value="1"/>
</dbReference>
<dbReference type="PIRSF" id="PIRSF006621">
    <property type="entry name" value="Dus"/>
    <property type="match status" value="1"/>
</dbReference>
<dbReference type="SUPFAM" id="SSF51395">
    <property type="entry name" value="FMN-linked oxidoreductases"/>
    <property type="match status" value="1"/>
</dbReference>
<dbReference type="PROSITE" id="PS01136">
    <property type="entry name" value="UPF0034"/>
    <property type="match status" value="1"/>
</dbReference>
<reference key="1">
    <citation type="journal article" date="2001" name="Nature">
        <title>Genome sequence of enterohaemorrhagic Escherichia coli O157:H7.</title>
        <authorList>
            <person name="Perna N.T."/>
            <person name="Plunkett G. III"/>
            <person name="Burland V."/>
            <person name="Mau B."/>
            <person name="Glasner J.D."/>
            <person name="Rose D.J."/>
            <person name="Mayhew G.F."/>
            <person name="Evans P.S."/>
            <person name="Gregor J."/>
            <person name="Kirkpatrick H.A."/>
            <person name="Posfai G."/>
            <person name="Hackett J."/>
            <person name="Klink S."/>
            <person name="Boutin A."/>
            <person name="Shao Y."/>
            <person name="Miller L."/>
            <person name="Grotbeck E.J."/>
            <person name="Davis N.W."/>
            <person name="Lim A."/>
            <person name="Dimalanta E.T."/>
            <person name="Potamousis K."/>
            <person name="Apodaca J."/>
            <person name="Anantharaman T.S."/>
            <person name="Lin J."/>
            <person name="Yen G."/>
            <person name="Schwartz D.C."/>
            <person name="Welch R.A."/>
            <person name="Blattner F.R."/>
        </authorList>
    </citation>
    <scope>NUCLEOTIDE SEQUENCE [LARGE SCALE GENOMIC DNA]</scope>
    <source>
        <strain>O157:H7 / EDL933 / ATCC 700927 / EHEC</strain>
    </source>
</reference>
<reference key="2">
    <citation type="journal article" date="2001" name="DNA Res.">
        <title>Complete genome sequence of enterohemorrhagic Escherichia coli O157:H7 and genomic comparison with a laboratory strain K-12.</title>
        <authorList>
            <person name="Hayashi T."/>
            <person name="Makino K."/>
            <person name="Ohnishi M."/>
            <person name="Kurokawa K."/>
            <person name="Ishii K."/>
            <person name="Yokoyama K."/>
            <person name="Han C.-G."/>
            <person name="Ohtsubo E."/>
            <person name="Nakayama K."/>
            <person name="Murata T."/>
            <person name="Tanaka M."/>
            <person name="Tobe T."/>
            <person name="Iida T."/>
            <person name="Takami H."/>
            <person name="Honda T."/>
            <person name="Sasakawa C."/>
            <person name="Ogasawara N."/>
            <person name="Yasunaga T."/>
            <person name="Kuhara S."/>
            <person name="Shiba T."/>
            <person name="Hattori M."/>
            <person name="Shinagawa H."/>
        </authorList>
    </citation>
    <scope>NUCLEOTIDE SEQUENCE [LARGE SCALE GENOMIC DNA]</scope>
    <source>
        <strain>O157:H7 / Sakai / RIMD 0509952 / EHEC</strain>
    </source>
</reference>
<proteinExistence type="inferred from homology"/>
<protein>
    <recommendedName>
        <fullName evidence="1">tRNA-dihydrouridine(16) synthase</fullName>
        <ecNumber evidence="1">1.3.1.-</ecNumber>
    </recommendedName>
    <alternativeName>
        <fullName evidence="1">U16-specific dihydrouridine synthase</fullName>
        <shortName evidence="1">U16-specific Dus</shortName>
    </alternativeName>
    <alternativeName>
        <fullName evidence="1">tRNA-dihydrouridine synthase C</fullName>
    </alternativeName>
</protein>
<feature type="chain" id="PRO_0000162110" description="tRNA-dihydrouridine(16) synthase">
    <location>
        <begin position="1"/>
        <end position="316"/>
    </location>
</feature>
<feature type="active site" description="Proton donor" evidence="1">
    <location>
        <position position="98"/>
    </location>
</feature>
<feature type="binding site" evidence="1">
    <location>
        <begin position="7"/>
        <end position="9"/>
    </location>
    <ligand>
        <name>FMN</name>
        <dbReference type="ChEBI" id="CHEBI:58210"/>
    </ligand>
</feature>
<feature type="binding site" evidence="1">
    <location>
        <position position="68"/>
    </location>
    <ligand>
        <name>FMN</name>
        <dbReference type="ChEBI" id="CHEBI:58210"/>
    </ligand>
</feature>
<feature type="binding site" evidence="1">
    <location>
        <position position="139"/>
    </location>
    <ligand>
        <name>FMN</name>
        <dbReference type="ChEBI" id="CHEBI:58210"/>
    </ligand>
</feature>
<feature type="binding site" evidence="1">
    <location>
        <begin position="200"/>
        <end position="202"/>
    </location>
    <ligand>
        <name>FMN</name>
        <dbReference type="ChEBI" id="CHEBI:58210"/>
    </ligand>
</feature>
<feature type="binding site" evidence="1">
    <location>
        <begin position="224"/>
        <end position="225"/>
    </location>
    <ligand>
        <name>FMN</name>
        <dbReference type="ChEBI" id="CHEBI:58210"/>
    </ligand>
</feature>
<feature type="site" description="Interacts with tRNA; defines subfamily-specific binding signature" evidence="1">
    <location>
        <position position="35"/>
    </location>
</feature>
<feature type="site" description="Interacts with tRNA" evidence="1">
    <location>
        <position position="95"/>
    </location>
</feature>
<feature type="site" description="Interacts with tRNA" evidence="1">
    <location>
        <position position="176"/>
    </location>
</feature>
<feature type="site" description="Interacts with tRNA; defines subfamily-specific binding signature" evidence="1">
    <location>
        <position position="272"/>
    </location>
</feature>
<feature type="site" description="Interacts with tRNA; defines subfamily-specific binding signature" evidence="1">
    <location>
        <position position="274"/>
    </location>
</feature>
<feature type="site" description="Interacts with tRNA" evidence="1">
    <location>
        <position position="279"/>
    </location>
</feature>
<feature type="site" description="Interacts with tRNA; defines subfamily-specific binding signature" evidence="1">
    <location>
        <position position="295"/>
    </location>
</feature>
<feature type="sequence conflict" description="In Ref. 2; BAB36449." evidence="2" ref="2">
    <original>S</original>
    <variation>G</variation>
    <location>
        <position position="263"/>
    </location>
</feature>
<organism>
    <name type="scientific">Escherichia coli O157:H7</name>
    <dbReference type="NCBI Taxonomy" id="83334"/>
    <lineage>
        <taxon>Bacteria</taxon>
        <taxon>Pseudomonadati</taxon>
        <taxon>Pseudomonadota</taxon>
        <taxon>Gammaproteobacteria</taxon>
        <taxon>Enterobacterales</taxon>
        <taxon>Enterobacteriaceae</taxon>
        <taxon>Escherichia</taxon>
    </lineage>
</organism>
<keyword id="KW-0285">Flavoprotein</keyword>
<keyword id="KW-0288">FMN</keyword>
<keyword id="KW-0521">NADP</keyword>
<keyword id="KW-0560">Oxidoreductase</keyword>
<keyword id="KW-1185">Reference proteome</keyword>
<keyword id="KW-0694">RNA-binding</keyword>
<keyword id="KW-0819">tRNA processing</keyword>
<keyword id="KW-0820">tRNA-binding</keyword>
<sequence>MRVLLAPMEGVLDSLVRELLTEVNDYDLCITEFVRVVDQLLPVKVFHRICPELQNASRTPSGTLVRVQLLGQFPQWLAENAARAVELGSWGVDLNCGCPSKTVNGSGGGATLLKDPELIYQGAKAMREAVPAHLPVSVKVRLGWDSGEKKFEIADAVQQAGATELVVHGRTKEQGYRAEHIDWQAIGEIRQRLNIPVIANGEIWDWQSAQECMAISGCDSVMIGRGALNIPNLSRVVKYNEPRMPWPEVVALLQKYTRLEKQSDTGLYHVARIKQWLSYLRKEYDEATELFQHVRVLNNSPDIARAIQAIDIGKLR</sequence>
<gene>
    <name evidence="1" type="primary">dusC</name>
    <name type="ordered locus">Z3389</name>
    <name type="ordered locus">ECs3026</name>
</gene>
<comment type="function">
    <text evidence="1">Catalyzes the synthesis of 5,6-dihydrouridine (D), a modified base found in the D-loop of most tRNAs, via the reduction of the C5-C6 double bond in target uridines. Specifically modifies U16 in tRNAs.</text>
</comment>
<comment type="catalytic activity">
    <reaction evidence="1">
        <text>5,6-dihydrouridine(16) in tRNA + NADP(+) = uridine(16) in tRNA + NADPH + H(+)</text>
        <dbReference type="Rhea" id="RHEA:53376"/>
        <dbReference type="Rhea" id="RHEA-COMP:13543"/>
        <dbReference type="Rhea" id="RHEA-COMP:13544"/>
        <dbReference type="ChEBI" id="CHEBI:15378"/>
        <dbReference type="ChEBI" id="CHEBI:57783"/>
        <dbReference type="ChEBI" id="CHEBI:58349"/>
        <dbReference type="ChEBI" id="CHEBI:65315"/>
        <dbReference type="ChEBI" id="CHEBI:74443"/>
    </reaction>
</comment>
<comment type="catalytic activity">
    <reaction evidence="1">
        <text>5,6-dihydrouridine(16) in tRNA + NAD(+) = uridine(16) in tRNA + NADH + H(+)</text>
        <dbReference type="Rhea" id="RHEA:53380"/>
        <dbReference type="Rhea" id="RHEA-COMP:13543"/>
        <dbReference type="Rhea" id="RHEA-COMP:13544"/>
        <dbReference type="ChEBI" id="CHEBI:15378"/>
        <dbReference type="ChEBI" id="CHEBI:57540"/>
        <dbReference type="ChEBI" id="CHEBI:57945"/>
        <dbReference type="ChEBI" id="CHEBI:65315"/>
        <dbReference type="ChEBI" id="CHEBI:74443"/>
    </reaction>
</comment>
<comment type="cofactor">
    <cofactor evidence="1">
        <name>FMN</name>
        <dbReference type="ChEBI" id="CHEBI:58210"/>
    </cofactor>
</comment>
<comment type="similarity">
    <text evidence="1">Belongs to the Dus family. DusC subfamily.</text>
</comment>
<accession>Q8XEC6</accession>